<dbReference type="EMBL" id="CP000033">
    <property type="protein sequence ID" value="AAV43772.1"/>
    <property type="molecule type" value="Genomic_DNA"/>
</dbReference>
<dbReference type="RefSeq" id="WP_003549412.1">
    <property type="nucleotide sequence ID" value="NC_006814.3"/>
</dbReference>
<dbReference type="RefSeq" id="YP_194803.1">
    <property type="nucleotide sequence ID" value="NC_006814.3"/>
</dbReference>
<dbReference type="SMR" id="Q5FHQ2"/>
<dbReference type="STRING" id="272621.LBA1979"/>
<dbReference type="GeneID" id="93290887"/>
<dbReference type="KEGG" id="lac:LBA1979"/>
<dbReference type="PATRIC" id="fig|272621.13.peg.1883"/>
<dbReference type="eggNOG" id="COG0230">
    <property type="taxonomic scope" value="Bacteria"/>
</dbReference>
<dbReference type="HOGENOM" id="CLU_129938_2_0_9"/>
<dbReference type="OrthoDB" id="9804164at2"/>
<dbReference type="BioCyc" id="LACI272621:G1G49-1927-MONOMER"/>
<dbReference type="PRO" id="PR:Q5FHQ2"/>
<dbReference type="Proteomes" id="UP000006381">
    <property type="component" value="Chromosome"/>
</dbReference>
<dbReference type="GO" id="GO:1990904">
    <property type="term" value="C:ribonucleoprotein complex"/>
    <property type="evidence" value="ECO:0007669"/>
    <property type="project" value="UniProtKB-KW"/>
</dbReference>
<dbReference type="GO" id="GO:0005840">
    <property type="term" value="C:ribosome"/>
    <property type="evidence" value="ECO:0007669"/>
    <property type="project" value="UniProtKB-KW"/>
</dbReference>
<dbReference type="GO" id="GO:0003735">
    <property type="term" value="F:structural constituent of ribosome"/>
    <property type="evidence" value="ECO:0007669"/>
    <property type="project" value="InterPro"/>
</dbReference>
<dbReference type="GO" id="GO:0006412">
    <property type="term" value="P:translation"/>
    <property type="evidence" value="ECO:0007669"/>
    <property type="project" value="UniProtKB-UniRule"/>
</dbReference>
<dbReference type="FunFam" id="1.10.287.3980:FF:000001">
    <property type="entry name" value="Mitochondrial ribosomal protein L34"/>
    <property type="match status" value="1"/>
</dbReference>
<dbReference type="Gene3D" id="1.10.287.3980">
    <property type="match status" value="1"/>
</dbReference>
<dbReference type="HAMAP" id="MF_00391">
    <property type="entry name" value="Ribosomal_bL34"/>
    <property type="match status" value="1"/>
</dbReference>
<dbReference type="InterPro" id="IPR000271">
    <property type="entry name" value="Ribosomal_bL34"/>
</dbReference>
<dbReference type="InterPro" id="IPR020939">
    <property type="entry name" value="Ribosomal_bL34_CS"/>
</dbReference>
<dbReference type="NCBIfam" id="TIGR01030">
    <property type="entry name" value="rpmH_bact"/>
    <property type="match status" value="1"/>
</dbReference>
<dbReference type="PANTHER" id="PTHR14503:SF4">
    <property type="entry name" value="LARGE RIBOSOMAL SUBUNIT PROTEIN BL34M"/>
    <property type="match status" value="1"/>
</dbReference>
<dbReference type="PANTHER" id="PTHR14503">
    <property type="entry name" value="MITOCHONDRIAL RIBOSOMAL PROTEIN 34 FAMILY MEMBER"/>
    <property type="match status" value="1"/>
</dbReference>
<dbReference type="Pfam" id="PF00468">
    <property type="entry name" value="Ribosomal_L34"/>
    <property type="match status" value="1"/>
</dbReference>
<dbReference type="PROSITE" id="PS00784">
    <property type="entry name" value="RIBOSOMAL_L34"/>
    <property type="match status" value="1"/>
</dbReference>
<gene>
    <name evidence="1" type="primary">rpmH</name>
    <name type="ordered locus">LBA1979</name>
</gene>
<evidence type="ECO:0000255" key="1">
    <source>
        <dbReference type="HAMAP-Rule" id="MF_00391"/>
    </source>
</evidence>
<evidence type="ECO:0000256" key="2">
    <source>
        <dbReference type="SAM" id="MobiDB-lite"/>
    </source>
</evidence>
<evidence type="ECO:0000305" key="3"/>
<feature type="chain" id="PRO_0000187395" description="Large ribosomal subunit protein bL34">
    <location>
        <begin position="1"/>
        <end position="46"/>
    </location>
</feature>
<feature type="region of interest" description="Disordered" evidence="2">
    <location>
        <begin position="24"/>
        <end position="46"/>
    </location>
</feature>
<feature type="compositionally biased region" description="Basic residues" evidence="2">
    <location>
        <begin position="32"/>
        <end position="46"/>
    </location>
</feature>
<protein>
    <recommendedName>
        <fullName evidence="1">Large ribosomal subunit protein bL34</fullName>
    </recommendedName>
    <alternativeName>
        <fullName evidence="3">50S ribosomal protein L34</fullName>
    </alternativeName>
</protein>
<proteinExistence type="inferred from homology"/>
<sequence>MTTKRTYQPKKRHRSRVHGFMKRMSTSNGRKVLARRRAKGRKVLSA</sequence>
<organism>
    <name type="scientific">Lactobacillus acidophilus (strain ATCC 700396 / NCK56 / N2 / NCFM)</name>
    <dbReference type="NCBI Taxonomy" id="272621"/>
    <lineage>
        <taxon>Bacteria</taxon>
        <taxon>Bacillati</taxon>
        <taxon>Bacillota</taxon>
        <taxon>Bacilli</taxon>
        <taxon>Lactobacillales</taxon>
        <taxon>Lactobacillaceae</taxon>
        <taxon>Lactobacillus</taxon>
    </lineage>
</organism>
<keyword id="KW-1185">Reference proteome</keyword>
<keyword id="KW-0687">Ribonucleoprotein</keyword>
<keyword id="KW-0689">Ribosomal protein</keyword>
<accession>Q5FHQ2</accession>
<reference key="1">
    <citation type="journal article" date="2005" name="Proc. Natl. Acad. Sci. U.S.A.">
        <title>Complete genome sequence of the probiotic lactic acid bacterium Lactobacillus acidophilus NCFM.</title>
        <authorList>
            <person name="Altermann E."/>
            <person name="Russell W.M."/>
            <person name="Azcarate-Peril M.A."/>
            <person name="Barrangou R."/>
            <person name="Buck B.L."/>
            <person name="McAuliffe O."/>
            <person name="Souther N."/>
            <person name="Dobson A."/>
            <person name="Duong T."/>
            <person name="Callanan M."/>
            <person name="Lick S."/>
            <person name="Hamrick A."/>
            <person name="Cano R."/>
            <person name="Klaenhammer T.R."/>
        </authorList>
    </citation>
    <scope>NUCLEOTIDE SEQUENCE [LARGE SCALE GENOMIC DNA]</scope>
    <source>
        <strain>ATCC 700396 / NCK56 / N2 / NCFM</strain>
    </source>
</reference>
<comment type="similarity">
    <text evidence="1">Belongs to the bacterial ribosomal protein bL34 family.</text>
</comment>
<name>RL34_LACAC</name>